<reference key="1">
    <citation type="journal article" date="2005" name="Nucleic Acids Res.">
        <title>The genome sequence of Xanthomonas oryzae pathovar oryzae KACC10331, the bacterial blight pathogen of rice.</title>
        <authorList>
            <person name="Lee B.-M."/>
            <person name="Park Y.-J."/>
            <person name="Park D.-S."/>
            <person name="Kang H.-W."/>
            <person name="Kim J.-G."/>
            <person name="Song E.-S."/>
            <person name="Park I.-C."/>
            <person name="Yoon U.-H."/>
            <person name="Hahn J.-H."/>
            <person name="Koo B.-S."/>
            <person name="Lee G.-B."/>
            <person name="Kim H."/>
            <person name="Park H.-S."/>
            <person name="Yoon K.-O."/>
            <person name="Kim J.-H."/>
            <person name="Jung C.-H."/>
            <person name="Koh N.-H."/>
            <person name="Seo J.-S."/>
            <person name="Go S.-J."/>
        </authorList>
    </citation>
    <scope>NUCLEOTIDE SEQUENCE [LARGE SCALE GENOMIC DNA]</scope>
    <source>
        <strain>KACC10331 / KXO85</strain>
    </source>
</reference>
<evidence type="ECO:0000255" key="1">
    <source>
        <dbReference type="HAMAP-Rule" id="MF_00489"/>
    </source>
</evidence>
<evidence type="ECO:0000305" key="2"/>
<name>Y2722_XANOR</name>
<protein>
    <recommendedName>
        <fullName evidence="1">UPF0178 protein XOO2722</fullName>
    </recommendedName>
</protein>
<keyword id="KW-1185">Reference proteome</keyword>
<feature type="chain" id="PRO_0000176026" description="UPF0178 protein XOO2722">
    <location>
        <begin position="1"/>
        <end position="161"/>
    </location>
</feature>
<proteinExistence type="inferred from homology"/>
<organism>
    <name type="scientific">Xanthomonas oryzae pv. oryzae (strain KACC10331 / KXO85)</name>
    <dbReference type="NCBI Taxonomy" id="291331"/>
    <lineage>
        <taxon>Bacteria</taxon>
        <taxon>Pseudomonadati</taxon>
        <taxon>Pseudomonadota</taxon>
        <taxon>Gammaproteobacteria</taxon>
        <taxon>Lysobacterales</taxon>
        <taxon>Lysobacteraceae</taxon>
        <taxon>Xanthomonas</taxon>
    </lineage>
</organism>
<comment type="similarity">
    <text evidence="1">Belongs to the UPF0178 family.</text>
</comment>
<comment type="sequence caution" evidence="2">
    <conflict type="erroneous initiation">
        <sequence resource="EMBL-CDS" id="AAW75976"/>
    </conflict>
</comment>
<gene>
    <name type="ordered locus">XOO2722</name>
</gene>
<dbReference type="EMBL" id="AE013598">
    <property type="protein sequence ID" value="AAW75976.1"/>
    <property type="status" value="ALT_INIT"/>
    <property type="molecule type" value="Genomic_DNA"/>
</dbReference>
<dbReference type="SMR" id="Q5GZ95"/>
<dbReference type="STRING" id="291331.XOO2722"/>
<dbReference type="KEGG" id="xoo:XOO2722"/>
<dbReference type="HOGENOM" id="CLU_106619_2_1_6"/>
<dbReference type="Proteomes" id="UP000006735">
    <property type="component" value="Chromosome"/>
</dbReference>
<dbReference type="CDD" id="cd18720">
    <property type="entry name" value="PIN_YqxD-like"/>
    <property type="match status" value="1"/>
</dbReference>
<dbReference type="HAMAP" id="MF_00489">
    <property type="entry name" value="UPF0178"/>
    <property type="match status" value="1"/>
</dbReference>
<dbReference type="InterPro" id="IPR003791">
    <property type="entry name" value="UPF0178"/>
</dbReference>
<dbReference type="NCBIfam" id="NF001095">
    <property type="entry name" value="PRK00124.1"/>
    <property type="match status" value="1"/>
</dbReference>
<dbReference type="PANTHER" id="PTHR35146">
    <property type="entry name" value="UPF0178 PROTEIN YAII"/>
    <property type="match status" value="1"/>
</dbReference>
<dbReference type="PANTHER" id="PTHR35146:SF1">
    <property type="entry name" value="UPF0178 PROTEIN YAII"/>
    <property type="match status" value="1"/>
</dbReference>
<dbReference type="Pfam" id="PF02639">
    <property type="entry name" value="DUF188"/>
    <property type="match status" value="1"/>
</dbReference>
<sequence length="161" mass="16901">MKPLHTPKPAQIWVDADACPAVIRDILFRAAARTGTALTLVANHSLSTPTLPHVRAIQVPGGPDAADDAIAERVAAGDLVVTQDIPLAARVLEAGATAVGPRGEPFTSNTIKERLSVRGFMEELRGAGIATGGPSALHARDRQAFAAQLDRWLAAQPRPPL</sequence>
<accession>Q5GZ95</accession>